<protein>
    <recommendedName>
        <fullName>Probable coatomer subunit beta'</fullName>
    </recommendedName>
    <alternativeName>
        <fullName>Beta'-coat protein</fullName>
        <shortName>Beta'-COP</shortName>
    </alternativeName>
</protein>
<keyword id="KW-0963">Cytoplasm</keyword>
<keyword id="KW-0968">Cytoplasmic vesicle</keyword>
<keyword id="KW-0931">ER-Golgi transport</keyword>
<keyword id="KW-0333">Golgi apparatus</keyword>
<keyword id="KW-0472">Membrane</keyword>
<keyword id="KW-0653">Protein transport</keyword>
<keyword id="KW-1185">Reference proteome</keyword>
<keyword id="KW-0677">Repeat</keyword>
<keyword id="KW-0813">Transport</keyword>
<keyword id="KW-0853">WD repeat</keyword>
<evidence type="ECO:0000250" key="1"/>
<evidence type="ECO:0000305" key="2"/>
<dbReference type="EMBL" id="CU329671">
    <property type="protein sequence ID" value="CAA16920.2"/>
    <property type="molecule type" value="Genomic_DNA"/>
</dbReference>
<dbReference type="PIR" id="T39962">
    <property type="entry name" value="T39962"/>
</dbReference>
<dbReference type="RefSeq" id="XP_001713153.1">
    <property type="nucleotide sequence ID" value="XM_001713101.2"/>
</dbReference>
<dbReference type="SMR" id="O42937"/>
<dbReference type="BioGRID" id="276588">
    <property type="interactions" value="3"/>
</dbReference>
<dbReference type="FunCoup" id="O42937">
    <property type="interactions" value="727"/>
</dbReference>
<dbReference type="STRING" id="284812.O42937"/>
<dbReference type="iPTMnet" id="O42937"/>
<dbReference type="PaxDb" id="4896-SPBC16C6.13c.1"/>
<dbReference type="EnsemblFungi" id="SPBC16C6.13c.1">
    <property type="protein sequence ID" value="SPBC16C6.13c.1:pep"/>
    <property type="gene ID" value="SPBC16C6.13c"/>
</dbReference>
<dbReference type="PomBase" id="SPBC16C6.13c">
    <property type="gene designation" value="sec27"/>
</dbReference>
<dbReference type="VEuPathDB" id="FungiDB:SPBC16C6.13c"/>
<dbReference type="eggNOG" id="KOG0276">
    <property type="taxonomic scope" value="Eukaryota"/>
</dbReference>
<dbReference type="HOGENOM" id="CLU_005507_1_0_1"/>
<dbReference type="InParanoid" id="O42937"/>
<dbReference type="OMA" id="YVDYYPQ"/>
<dbReference type="PhylomeDB" id="O42937"/>
<dbReference type="Reactome" id="R-SPO-6807878">
    <property type="pathway name" value="COPI-mediated anterograde transport"/>
</dbReference>
<dbReference type="Reactome" id="R-SPO-6811434">
    <property type="pathway name" value="COPI-dependent Golgi-to-ER retrograde traffic"/>
</dbReference>
<dbReference type="PRO" id="PR:O42937"/>
<dbReference type="Proteomes" id="UP000002485">
    <property type="component" value="Chromosome II"/>
</dbReference>
<dbReference type="GO" id="GO:0030126">
    <property type="term" value="C:COPI vesicle coat"/>
    <property type="evidence" value="ECO:0000318"/>
    <property type="project" value="GO_Central"/>
</dbReference>
<dbReference type="GO" id="GO:0005829">
    <property type="term" value="C:cytosol"/>
    <property type="evidence" value="ECO:0007005"/>
    <property type="project" value="PomBase"/>
</dbReference>
<dbReference type="GO" id="GO:0000139">
    <property type="term" value="C:Golgi membrane"/>
    <property type="evidence" value="ECO:0007669"/>
    <property type="project" value="UniProtKB-SubCell"/>
</dbReference>
<dbReference type="GO" id="GO:0005634">
    <property type="term" value="C:nucleus"/>
    <property type="evidence" value="ECO:0007005"/>
    <property type="project" value="PomBase"/>
</dbReference>
<dbReference type="GO" id="GO:0005198">
    <property type="term" value="F:structural molecule activity"/>
    <property type="evidence" value="ECO:0007669"/>
    <property type="project" value="InterPro"/>
</dbReference>
<dbReference type="GO" id="GO:0006888">
    <property type="term" value="P:endoplasmic reticulum to Golgi vesicle-mediated transport"/>
    <property type="evidence" value="ECO:0000318"/>
    <property type="project" value="GO_Central"/>
</dbReference>
<dbReference type="GO" id="GO:0006891">
    <property type="term" value="P:intra-Golgi vesicle-mediated transport"/>
    <property type="evidence" value="ECO:0000318"/>
    <property type="project" value="GO_Central"/>
</dbReference>
<dbReference type="GO" id="GO:0006886">
    <property type="term" value="P:intracellular protein transport"/>
    <property type="evidence" value="ECO:0000318"/>
    <property type="project" value="GO_Central"/>
</dbReference>
<dbReference type="GO" id="GO:0032511">
    <property type="term" value="P:late endosome to vacuole transport via multivesicular body sorting pathway"/>
    <property type="evidence" value="ECO:0000266"/>
    <property type="project" value="PomBase"/>
</dbReference>
<dbReference type="GO" id="GO:0006890">
    <property type="term" value="P:retrograde vesicle-mediated transport, Golgi to endoplasmic reticulum"/>
    <property type="evidence" value="ECO:0000318"/>
    <property type="project" value="GO_Central"/>
</dbReference>
<dbReference type="CDD" id="cd22947">
    <property type="entry name" value="Coatomer_WDAD_beta-like"/>
    <property type="match status" value="1"/>
</dbReference>
<dbReference type="CDD" id="cd00200">
    <property type="entry name" value="WD40"/>
    <property type="match status" value="1"/>
</dbReference>
<dbReference type="FunFam" id="2.130.10.10:FF:000016">
    <property type="entry name" value="Coatomer alpha subunit, putative"/>
    <property type="match status" value="1"/>
</dbReference>
<dbReference type="FunFam" id="1.25.40.470:FF:000001">
    <property type="entry name" value="Coatomer subunit beta"/>
    <property type="match status" value="1"/>
</dbReference>
<dbReference type="Gene3D" id="1.25.40.470">
    <property type="match status" value="1"/>
</dbReference>
<dbReference type="Gene3D" id="2.130.10.10">
    <property type="entry name" value="YVTN repeat-like/Quinoprotein amine dehydrogenase"/>
    <property type="match status" value="1"/>
</dbReference>
<dbReference type="InterPro" id="IPR006692">
    <property type="entry name" value="Beta-prop_COPA/B_2nd"/>
</dbReference>
<dbReference type="InterPro" id="IPR050844">
    <property type="entry name" value="Coatomer_complex_subunit"/>
</dbReference>
<dbReference type="InterPro" id="IPR016453">
    <property type="entry name" value="COPB2"/>
</dbReference>
<dbReference type="InterPro" id="IPR020472">
    <property type="entry name" value="G-protein_beta_WD-40_rep"/>
</dbReference>
<dbReference type="InterPro" id="IPR056176">
    <property type="entry name" value="TPR_COPA_B"/>
</dbReference>
<dbReference type="InterPro" id="IPR015943">
    <property type="entry name" value="WD40/YVTN_repeat-like_dom_sf"/>
</dbReference>
<dbReference type="InterPro" id="IPR036322">
    <property type="entry name" value="WD40_repeat_dom_sf"/>
</dbReference>
<dbReference type="InterPro" id="IPR001680">
    <property type="entry name" value="WD40_rpt"/>
</dbReference>
<dbReference type="PANTHER" id="PTHR19876">
    <property type="entry name" value="COATOMER"/>
    <property type="match status" value="1"/>
</dbReference>
<dbReference type="PANTHER" id="PTHR19876:SF2">
    <property type="entry name" value="COATOMER SUBUNIT BETA"/>
    <property type="match status" value="1"/>
</dbReference>
<dbReference type="Pfam" id="PF04053">
    <property type="entry name" value="B-prop_COPA_B_2nd"/>
    <property type="match status" value="1"/>
</dbReference>
<dbReference type="Pfam" id="PF23953">
    <property type="entry name" value="TPR_COPA_B"/>
    <property type="match status" value="1"/>
</dbReference>
<dbReference type="Pfam" id="PF00400">
    <property type="entry name" value="WD40"/>
    <property type="match status" value="6"/>
</dbReference>
<dbReference type="PIRSF" id="PIRSF005567">
    <property type="entry name" value="Coatomer_beta'_subunit"/>
    <property type="match status" value="1"/>
</dbReference>
<dbReference type="PRINTS" id="PR00320">
    <property type="entry name" value="GPROTEINBRPT"/>
</dbReference>
<dbReference type="SMART" id="SM00320">
    <property type="entry name" value="WD40"/>
    <property type="match status" value="7"/>
</dbReference>
<dbReference type="SUPFAM" id="SSF50978">
    <property type="entry name" value="WD40 repeat-like"/>
    <property type="match status" value="2"/>
</dbReference>
<dbReference type="PROSITE" id="PS50082">
    <property type="entry name" value="WD_REPEATS_2"/>
    <property type="match status" value="4"/>
</dbReference>
<dbReference type="PROSITE" id="PS50294">
    <property type="entry name" value="WD_REPEATS_REGION"/>
    <property type="match status" value="1"/>
</dbReference>
<gene>
    <name type="primary">sec27</name>
    <name type="ORF">SPBC16C6.13c</name>
    <name type="ORF">SPBC244.03</name>
</gene>
<sequence length="796" mass="89803">MMRLDFQRKLLSHTERVKAVDFHPTEPWVIASHYNGQVGIWNYNTQTLVRSFDINDVPIRACAFIARKNWFVCGSDDFQVRVYNYNTGEKVTQFEAHPDYIRALVVHPTQPFLLTSSDDMTIKCFNWDMSWKCVQTFEGHSRYVMSLAINPKDTNTFASSCLDGTVKVWSFGSSVANFTLQAHDRGVNYVNYYPAGDKPYLITAGDDNLIKVWDYQTKACVRILEGHTNNVSFAFFHSKFPIIISGSEDGTVKIWHTLSYSLIKSYNFSLDRAWCIAQNKDNGLVTVGFDNGLITFSLGRDEPSVTMDSSGKVVWSNYNEVMSAMIRPAKEQSDLTDGSLISLSVKELGTTELYPAVLKHSPNGRFVSVCGNGEYIVYTALAWRNKAYGKALDFAWSADSNVYGSRTSDRSIVIHKNFKESNRLDLSYSCDKIFGGFLLGVVGSDFICFYDWDTGILVRKIDVKPKGVYWNDDGRFVILACDDDFYLLGFNAEMFYSAVESGTADEEEGVADSFEALADVSESVVNGKWVAETFIYTTTAARLNYLIGDQTYKIANVESSFYLLGYIPRDDRIYLTDRDMNVVSYSFNLAIIEYQSLVLKGDLEAAQGLLEQISETDRPRLSDFLSRLGYKEAALELSGDSVQRFELALDAQRLDIASQIAQELDDPLKWRSLGDAALNAWDFVLAQECFEKGKDYGSLVLLYTATNNHEGLKELSQLTKSTKINNTAFICSWLTNQPAECVNILTSTQRYPEANLFAATYCPDEVKNVLPEWKVDLTKNQKERIADSLGDLELKN</sequence>
<comment type="function">
    <text evidence="1">The coatomer is a cytosolic protein complex that binds to dilysine motifs and reversibly associates with Golgi non-clathrin-coated vesicles, which further mediate biosynthetic protein transport from the ER, via the Golgi up to the trans Golgi network. Coatomer complex is required for budding from Golgi membranes, and is essential for the retrograde Golgi-to-ER transport of dilysine-tagged proteins (By similarity).</text>
</comment>
<comment type="subunit">
    <text evidence="1">Oligomeric complex that consists of at least the alpha, beta, beta', gamma, delta, epsilon and zeta subunits.</text>
</comment>
<comment type="subcellular location">
    <subcellularLocation>
        <location evidence="1">Cytoplasm</location>
    </subcellularLocation>
    <subcellularLocation>
        <location evidence="1">Golgi apparatus membrane</location>
        <topology evidence="1">Peripheral membrane protein</topology>
        <orientation evidence="1">Cytoplasmic side</orientation>
    </subcellularLocation>
    <subcellularLocation>
        <location evidence="1">Cytoplasmic vesicle</location>
        <location evidence="1">COPI-coated vesicle membrane</location>
        <topology evidence="1">Peripheral membrane protein</topology>
        <orientation evidence="1">Cytoplasmic side</orientation>
    </subcellularLocation>
    <text evidence="1">The coatomer is cytoplasmic or polymerized on the cytoplasmic side of the Golgi, as well as on the vesicles/buds originating from it.</text>
</comment>
<comment type="similarity">
    <text evidence="2">Belongs to the WD repeat COPB2 family.</text>
</comment>
<accession>O42937</accession>
<organism>
    <name type="scientific">Schizosaccharomyces pombe (strain 972 / ATCC 24843)</name>
    <name type="common">Fission yeast</name>
    <dbReference type="NCBI Taxonomy" id="284812"/>
    <lineage>
        <taxon>Eukaryota</taxon>
        <taxon>Fungi</taxon>
        <taxon>Dikarya</taxon>
        <taxon>Ascomycota</taxon>
        <taxon>Taphrinomycotina</taxon>
        <taxon>Schizosaccharomycetes</taxon>
        <taxon>Schizosaccharomycetales</taxon>
        <taxon>Schizosaccharomycetaceae</taxon>
        <taxon>Schizosaccharomyces</taxon>
    </lineage>
</organism>
<reference key="1">
    <citation type="journal article" date="2002" name="Nature">
        <title>The genome sequence of Schizosaccharomyces pombe.</title>
        <authorList>
            <person name="Wood V."/>
            <person name="Gwilliam R."/>
            <person name="Rajandream M.A."/>
            <person name="Lyne M.H."/>
            <person name="Lyne R."/>
            <person name="Stewart A."/>
            <person name="Sgouros J.G."/>
            <person name="Peat N."/>
            <person name="Hayles J."/>
            <person name="Baker S.G."/>
            <person name="Basham D."/>
            <person name="Bowman S."/>
            <person name="Brooks K."/>
            <person name="Brown D."/>
            <person name="Brown S."/>
            <person name="Chillingworth T."/>
            <person name="Churcher C.M."/>
            <person name="Collins M."/>
            <person name="Connor R."/>
            <person name="Cronin A."/>
            <person name="Davis P."/>
            <person name="Feltwell T."/>
            <person name="Fraser A."/>
            <person name="Gentles S."/>
            <person name="Goble A."/>
            <person name="Hamlin N."/>
            <person name="Harris D.E."/>
            <person name="Hidalgo J."/>
            <person name="Hodgson G."/>
            <person name="Holroyd S."/>
            <person name="Hornsby T."/>
            <person name="Howarth S."/>
            <person name="Huckle E.J."/>
            <person name="Hunt S."/>
            <person name="Jagels K."/>
            <person name="James K.D."/>
            <person name="Jones L."/>
            <person name="Jones M."/>
            <person name="Leather S."/>
            <person name="McDonald S."/>
            <person name="McLean J."/>
            <person name="Mooney P."/>
            <person name="Moule S."/>
            <person name="Mungall K.L."/>
            <person name="Murphy L.D."/>
            <person name="Niblett D."/>
            <person name="Odell C."/>
            <person name="Oliver K."/>
            <person name="O'Neil S."/>
            <person name="Pearson D."/>
            <person name="Quail M.A."/>
            <person name="Rabbinowitsch E."/>
            <person name="Rutherford K.M."/>
            <person name="Rutter S."/>
            <person name="Saunders D."/>
            <person name="Seeger K."/>
            <person name="Sharp S."/>
            <person name="Skelton J."/>
            <person name="Simmonds M.N."/>
            <person name="Squares R."/>
            <person name="Squares S."/>
            <person name="Stevens K."/>
            <person name="Taylor K."/>
            <person name="Taylor R.G."/>
            <person name="Tivey A."/>
            <person name="Walsh S.V."/>
            <person name="Warren T."/>
            <person name="Whitehead S."/>
            <person name="Woodward J.R."/>
            <person name="Volckaert G."/>
            <person name="Aert R."/>
            <person name="Robben J."/>
            <person name="Grymonprez B."/>
            <person name="Weltjens I."/>
            <person name="Vanstreels E."/>
            <person name="Rieger M."/>
            <person name="Schaefer M."/>
            <person name="Mueller-Auer S."/>
            <person name="Gabel C."/>
            <person name="Fuchs M."/>
            <person name="Duesterhoeft A."/>
            <person name="Fritzc C."/>
            <person name="Holzer E."/>
            <person name="Moestl D."/>
            <person name="Hilbert H."/>
            <person name="Borzym K."/>
            <person name="Langer I."/>
            <person name="Beck A."/>
            <person name="Lehrach H."/>
            <person name="Reinhardt R."/>
            <person name="Pohl T.M."/>
            <person name="Eger P."/>
            <person name="Zimmermann W."/>
            <person name="Wedler H."/>
            <person name="Wambutt R."/>
            <person name="Purnelle B."/>
            <person name="Goffeau A."/>
            <person name="Cadieu E."/>
            <person name="Dreano S."/>
            <person name="Gloux S."/>
            <person name="Lelaure V."/>
            <person name="Mottier S."/>
            <person name="Galibert F."/>
            <person name="Aves S.J."/>
            <person name="Xiang Z."/>
            <person name="Hunt C."/>
            <person name="Moore K."/>
            <person name="Hurst S.M."/>
            <person name="Lucas M."/>
            <person name="Rochet M."/>
            <person name="Gaillardin C."/>
            <person name="Tallada V.A."/>
            <person name="Garzon A."/>
            <person name="Thode G."/>
            <person name="Daga R.R."/>
            <person name="Cruzado L."/>
            <person name="Jimenez J."/>
            <person name="Sanchez M."/>
            <person name="del Rey F."/>
            <person name="Benito J."/>
            <person name="Dominguez A."/>
            <person name="Revuelta J.L."/>
            <person name="Moreno S."/>
            <person name="Armstrong J."/>
            <person name="Forsburg S.L."/>
            <person name="Cerutti L."/>
            <person name="Lowe T."/>
            <person name="McCombie W.R."/>
            <person name="Paulsen I."/>
            <person name="Potashkin J."/>
            <person name="Shpakovski G.V."/>
            <person name="Ussery D."/>
            <person name="Barrell B.G."/>
            <person name="Nurse P."/>
        </authorList>
    </citation>
    <scope>NUCLEOTIDE SEQUENCE [LARGE SCALE GENOMIC DNA]</scope>
    <source>
        <strain>972 / ATCC 24843</strain>
    </source>
</reference>
<name>COPB2_SCHPO</name>
<feature type="chain" id="PRO_0000050917" description="Probable coatomer subunit beta'">
    <location>
        <begin position="1"/>
        <end position="796"/>
    </location>
</feature>
<feature type="repeat" description="WD 1">
    <location>
        <begin position="4"/>
        <end position="42"/>
    </location>
</feature>
<feature type="repeat" description="WD 2">
    <location>
        <begin position="46"/>
        <end position="84"/>
    </location>
</feature>
<feature type="repeat" description="WD 3">
    <location>
        <begin position="88"/>
        <end position="126"/>
    </location>
</feature>
<feature type="repeat" description="WD 4">
    <location>
        <begin position="131"/>
        <end position="170"/>
    </location>
</feature>
<feature type="repeat" description="WD 5">
    <location>
        <begin position="172"/>
        <end position="214"/>
    </location>
</feature>
<feature type="repeat" description="WD 6">
    <location>
        <begin position="218"/>
        <end position="256"/>
    </location>
</feature>
<proteinExistence type="inferred from homology"/>